<organism>
    <name type="scientific">Xanthomonas campestris pv. campestris (strain 8004)</name>
    <dbReference type="NCBI Taxonomy" id="314565"/>
    <lineage>
        <taxon>Bacteria</taxon>
        <taxon>Pseudomonadati</taxon>
        <taxon>Pseudomonadota</taxon>
        <taxon>Gammaproteobacteria</taxon>
        <taxon>Lysobacterales</taxon>
        <taxon>Lysobacteraceae</taxon>
        <taxon>Xanthomonas</taxon>
    </lineage>
</organism>
<proteinExistence type="inferred from homology"/>
<sequence>MSSRKYFGTDGIRGRVGQGVISADFVLRLGNALGRVLTAGRSKRPLVLIGKDTRISGYMFEAALEAGLVAAGADVQLIGPMPTPAIAFLTSTLRADAGVVISASHNPHYDNGIKFFSAEGEKLDDATEAAIEAALDAPFHTVESERLGKAIRTRDAIGRYIEFCKASVPRGFTLHGLKMVLDCAHGATYHIAPMLFRELGAEVVVIGAAPDGLNINDGVGSTHIDNLAAKVRETGAQLGIAFDGDGDRVLMADDQGNPVDGDDLLYVLARSWQASGRLTGTVVGTLMTNYGLEKALAALQIPFQRAKVGDRYVHQALVEGGGTLGGETSGHLLCLDRATTGDGIVSALQVLEALGRDGHSLREALSSLSKVPQQTVNVRLGGGAAKAIVEAASVQQALQQAQAAVQGRGRAFLRPSGTEPVVRVTVEADEAGLMQDTLDRLAGAVRDAA</sequence>
<feature type="chain" id="PRO_0000148005" description="Phosphoglucosamine mutase">
    <location>
        <begin position="1"/>
        <end position="449"/>
    </location>
</feature>
<feature type="active site" description="Phosphoserine intermediate" evidence="1">
    <location>
        <position position="104"/>
    </location>
</feature>
<feature type="binding site" description="via phosphate group" evidence="1">
    <location>
        <position position="104"/>
    </location>
    <ligand>
        <name>Mg(2+)</name>
        <dbReference type="ChEBI" id="CHEBI:18420"/>
    </ligand>
</feature>
<feature type="binding site" evidence="1">
    <location>
        <position position="243"/>
    </location>
    <ligand>
        <name>Mg(2+)</name>
        <dbReference type="ChEBI" id="CHEBI:18420"/>
    </ligand>
</feature>
<feature type="binding site" evidence="1">
    <location>
        <position position="245"/>
    </location>
    <ligand>
        <name>Mg(2+)</name>
        <dbReference type="ChEBI" id="CHEBI:18420"/>
    </ligand>
</feature>
<feature type="binding site" evidence="1">
    <location>
        <position position="247"/>
    </location>
    <ligand>
        <name>Mg(2+)</name>
        <dbReference type="ChEBI" id="CHEBI:18420"/>
    </ligand>
</feature>
<feature type="modified residue" description="Phosphoserine" evidence="1">
    <location>
        <position position="104"/>
    </location>
</feature>
<gene>
    <name evidence="1" type="primary">glmM</name>
    <name type="ordered locus">XC_1579</name>
</gene>
<comment type="function">
    <text evidence="1">Catalyzes the conversion of glucosamine-6-phosphate to glucosamine-1-phosphate.</text>
</comment>
<comment type="catalytic activity">
    <reaction evidence="1">
        <text>alpha-D-glucosamine 1-phosphate = D-glucosamine 6-phosphate</text>
        <dbReference type="Rhea" id="RHEA:23424"/>
        <dbReference type="ChEBI" id="CHEBI:58516"/>
        <dbReference type="ChEBI" id="CHEBI:58725"/>
        <dbReference type="EC" id="5.4.2.10"/>
    </reaction>
</comment>
<comment type="cofactor">
    <cofactor evidence="1">
        <name>Mg(2+)</name>
        <dbReference type="ChEBI" id="CHEBI:18420"/>
    </cofactor>
    <text evidence="1">Binds 1 Mg(2+) ion per subunit.</text>
</comment>
<comment type="PTM">
    <text evidence="1">Activated by phosphorylation.</text>
</comment>
<comment type="similarity">
    <text evidence="1">Belongs to the phosphohexose mutase family.</text>
</comment>
<protein>
    <recommendedName>
        <fullName evidence="1">Phosphoglucosamine mutase</fullName>
        <ecNumber evidence="1">5.4.2.10</ecNumber>
    </recommendedName>
</protein>
<keyword id="KW-0413">Isomerase</keyword>
<keyword id="KW-0460">Magnesium</keyword>
<keyword id="KW-0479">Metal-binding</keyword>
<keyword id="KW-0597">Phosphoprotein</keyword>
<accession>Q4UWC8</accession>
<reference key="1">
    <citation type="journal article" date="2005" name="Genome Res.">
        <title>Comparative and functional genomic analyses of the pathogenicity of phytopathogen Xanthomonas campestris pv. campestris.</title>
        <authorList>
            <person name="Qian W."/>
            <person name="Jia Y."/>
            <person name="Ren S.-X."/>
            <person name="He Y.-Q."/>
            <person name="Feng J.-X."/>
            <person name="Lu L.-F."/>
            <person name="Sun Q."/>
            <person name="Ying G."/>
            <person name="Tang D.-J."/>
            <person name="Tang H."/>
            <person name="Wu W."/>
            <person name="Hao P."/>
            <person name="Wang L."/>
            <person name="Jiang B.-L."/>
            <person name="Zeng S."/>
            <person name="Gu W.-Y."/>
            <person name="Lu G."/>
            <person name="Rong L."/>
            <person name="Tian Y."/>
            <person name="Yao Z."/>
            <person name="Fu G."/>
            <person name="Chen B."/>
            <person name="Fang R."/>
            <person name="Qiang B."/>
            <person name="Chen Z."/>
            <person name="Zhao G.-P."/>
            <person name="Tang J.-L."/>
            <person name="He C."/>
        </authorList>
    </citation>
    <scope>NUCLEOTIDE SEQUENCE [LARGE SCALE GENOMIC DNA]</scope>
    <source>
        <strain>8004</strain>
    </source>
</reference>
<dbReference type="EC" id="5.4.2.10" evidence="1"/>
<dbReference type="EMBL" id="CP000050">
    <property type="protein sequence ID" value="AAY48645.1"/>
    <property type="molecule type" value="Genomic_DNA"/>
</dbReference>
<dbReference type="RefSeq" id="WP_011037669.1">
    <property type="nucleotide sequence ID" value="NZ_CP155948.1"/>
</dbReference>
<dbReference type="SMR" id="Q4UWC8"/>
<dbReference type="KEGG" id="xcb:XC_1579"/>
<dbReference type="HOGENOM" id="CLU_016950_7_0_6"/>
<dbReference type="Proteomes" id="UP000000420">
    <property type="component" value="Chromosome"/>
</dbReference>
<dbReference type="GO" id="GO:0005829">
    <property type="term" value="C:cytosol"/>
    <property type="evidence" value="ECO:0007669"/>
    <property type="project" value="TreeGrafter"/>
</dbReference>
<dbReference type="GO" id="GO:0000287">
    <property type="term" value="F:magnesium ion binding"/>
    <property type="evidence" value="ECO:0007669"/>
    <property type="project" value="UniProtKB-UniRule"/>
</dbReference>
<dbReference type="GO" id="GO:0008966">
    <property type="term" value="F:phosphoglucosamine mutase activity"/>
    <property type="evidence" value="ECO:0007669"/>
    <property type="project" value="UniProtKB-UniRule"/>
</dbReference>
<dbReference type="GO" id="GO:0004615">
    <property type="term" value="F:phosphomannomutase activity"/>
    <property type="evidence" value="ECO:0007669"/>
    <property type="project" value="TreeGrafter"/>
</dbReference>
<dbReference type="GO" id="GO:0005975">
    <property type="term" value="P:carbohydrate metabolic process"/>
    <property type="evidence" value="ECO:0007669"/>
    <property type="project" value="InterPro"/>
</dbReference>
<dbReference type="GO" id="GO:0009252">
    <property type="term" value="P:peptidoglycan biosynthetic process"/>
    <property type="evidence" value="ECO:0007669"/>
    <property type="project" value="TreeGrafter"/>
</dbReference>
<dbReference type="GO" id="GO:0006048">
    <property type="term" value="P:UDP-N-acetylglucosamine biosynthetic process"/>
    <property type="evidence" value="ECO:0007669"/>
    <property type="project" value="TreeGrafter"/>
</dbReference>
<dbReference type="CDD" id="cd05802">
    <property type="entry name" value="GlmM"/>
    <property type="match status" value="1"/>
</dbReference>
<dbReference type="FunFam" id="3.30.310.50:FF:000001">
    <property type="entry name" value="Phosphoglucosamine mutase"/>
    <property type="match status" value="1"/>
</dbReference>
<dbReference type="FunFam" id="3.40.120.10:FF:000001">
    <property type="entry name" value="Phosphoglucosamine mutase"/>
    <property type="match status" value="1"/>
</dbReference>
<dbReference type="FunFam" id="3.40.120.10:FF:000003">
    <property type="entry name" value="Phosphoglucosamine mutase"/>
    <property type="match status" value="1"/>
</dbReference>
<dbReference type="Gene3D" id="3.40.120.10">
    <property type="entry name" value="Alpha-D-Glucose-1,6-Bisphosphate, subunit A, domain 3"/>
    <property type="match status" value="3"/>
</dbReference>
<dbReference type="Gene3D" id="3.30.310.50">
    <property type="entry name" value="Alpha-D-phosphohexomutase, C-terminal domain"/>
    <property type="match status" value="1"/>
</dbReference>
<dbReference type="HAMAP" id="MF_01554_B">
    <property type="entry name" value="GlmM_B"/>
    <property type="match status" value="1"/>
</dbReference>
<dbReference type="InterPro" id="IPR005844">
    <property type="entry name" value="A-D-PHexomutase_a/b/a-I"/>
</dbReference>
<dbReference type="InterPro" id="IPR016055">
    <property type="entry name" value="A-D-PHexomutase_a/b/a-I/II/III"/>
</dbReference>
<dbReference type="InterPro" id="IPR005845">
    <property type="entry name" value="A-D-PHexomutase_a/b/a-II"/>
</dbReference>
<dbReference type="InterPro" id="IPR005846">
    <property type="entry name" value="A-D-PHexomutase_a/b/a-III"/>
</dbReference>
<dbReference type="InterPro" id="IPR005843">
    <property type="entry name" value="A-D-PHexomutase_C"/>
</dbReference>
<dbReference type="InterPro" id="IPR036900">
    <property type="entry name" value="A-D-PHexomutase_C_sf"/>
</dbReference>
<dbReference type="InterPro" id="IPR016066">
    <property type="entry name" value="A-D-PHexomutase_CS"/>
</dbReference>
<dbReference type="InterPro" id="IPR005841">
    <property type="entry name" value="Alpha-D-phosphohexomutase_SF"/>
</dbReference>
<dbReference type="InterPro" id="IPR006352">
    <property type="entry name" value="GlmM_bact"/>
</dbReference>
<dbReference type="InterPro" id="IPR050060">
    <property type="entry name" value="Phosphoglucosamine_mutase"/>
</dbReference>
<dbReference type="NCBIfam" id="TIGR01455">
    <property type="entry name" value="glmM"/>
    <property type="match status" value="1"/>
</dbReference>
<dbReference type="NCBIfam" id="NF008139">
    <property type="entry name" value="PRK10887.1"/>
    <property type="match status" value="1"/>
</dbReference>
<dbReference type="PANTHER" id="PTHR42946:SF1">
    <property type="entry name" value="PHOSPHOGLUCOMUTASE (ALPHA-D-GLUCOSE-1,6-BISPHOSPHATE-DEPENDENT)"/>
    <property type="match status" value="1"/>
</dbReference>
<dbReference type="PANTHER" id="PTHR42946">
    <property type="entry name" value="PHOSPHOHEXOSE MUTASE"/>
    <property type="match status" value="1"/>
</dbReference>
<dbReference type="Pfam" id="PF02878">
    <property type="entry name" value="PGM_PMM_I"/>
    <property type="match status" value="1"/>
</dbReference>
<dbReference type="Pfam" id="PF02879">
    <property type="entry name" value="PGM_PMM_II"/>
    <property type="match status" value="1"/>
</dbReference>
<dbReference type="Pfam" id="PF02880">
    <property type="entry name" value="PGM_PMM_III"/>
    <property type="match status" value="1"/>
</dbReference>
<dbReference type="Pfam" id="PF00408">
    <property type="entry name" value="PGM_PMM_IV"/>
    <property type="match status" value="1"/>
</dbReference>
<dbReference type="PRINTS" id="PR00509">
    <property type="entry name" value="PGMPMM"/>
</dbReference>
<dbReference type="SUPFAM" id="SSF55957">
    <property type="entry name" value="Phosphoglucomutase, C-terminal domain"/>
    <property type="match status" value="1"/>
</dbReference>
<dbReference type="SUPFAM" id="SSF53738">
    <property type="entry name" value="Phosphoglucomutase, first 3 domains"/>
    <property type="match status" value="3"/>
</dbReference>
<dbReference type="PROSITE" id="PS00710">
    <property type="entry name" value="PGM_PMM"/>
    <property type="match status" value="1"/>
</dbReference>
<evidence type="ECO:0000255" key="1">
    <source>
        <dbReference type="HAMAP-Rule" id="MF_01554"/>
    </source>
</evidence>
<name>GLMM_XANC8</name>